<evidence type="ECO:0000250" key="1"/>
<evidence type="ECO:0000250" key="2">
    <source>
        <dbReference type="UniProtKB" id="P06801"/>
    </source>
</evidence>
<evidence type="ECO:0000255" key="3"/>
<evidence type="ECO:0000256" key="4">
    <source>
        <dbReference type="SAM" id="MobiDB-lite"/>
    </source>
</evidence>
<evidence type="ECO:0000269" key="5">
    <source>
    </source>
</evidence>
<evidence type="ECO:0000269" key="6">
    <source>
    </source>
</evidence>
<evidence type="ECO:0000303" key="7">
    <source>
    </source>
</evidence>
<evidence type="ECO:0000305" key="8"/>
<evidence type="ECO:0000305" key="9">
    <source>
    </source>
</evidence>
<evidence type="ECO:0000312" key="10">
    <source>
        <dbReference type="HGNC" id="HGNC:6985"/>
    </source>
</evidence>
<evidence type="ECO:0007829" key="11">
    <source>
        <dbReference type="PDB" id="8E78"/>
    </source>
</evidence>
<evidence type="ECO:0007829" key="12">
    <source>
        <dbReference type="PDB" id="8E8O"/>
    </source>
</evidence>
<evidence type="ECO:0007829" key="13">
    <source>
        <dbReference type="PDB" id="8EYN"/>
    </source>
</evidence>
<evidence type="ECO:0007829" key="14">
    <source>
        <dbReference type="PDB" id="8EYO"/>
    </source>
</evidence>
<sequence length="604" mass="67068">MGAALGTGTRLAPWPGRACGALPRWTPTAPAQGCHSKPGPARPVPLKKRGYDVTRNPHLNKGMAFTLEERLQLGIHGLIPPCFLSQDVQLLRIMRYYERQQSDLDKYIILMTLQDRNEKLFYRVLTSDVEKFMPIVYTPTVGLACQHYGLTFRRPRGLFITIHDKGHLATMLNSWPEDNIKAVVVTDGERILGLGDLGCYGMGIPVGKLALYTACGGVNPQQCLPVLLDVGTNNEELLRDPLYIGLKHQRVHGKAYDDLLDEFMQAVTDKFGINCLIQFEDFANANAFRLLNKYRNKYCMFNDDIQGTASVAVAGILAALRITKNKLSNHVFVFQGAGEAAMGIAHLLVMALEKEGVPKAEATRKIWMVDSKGLIVKGRSHLNHEKEMFAQDHPEVNSLEEVVRLVKPTAIIGVAAIAGAFTEQILRDMASFHERPIIFALSNPTSKAECTAEKCYRVTEGRGIFASGSPFKSVTLEDGKTFIPGQGNNAYVFPGVALGVIAGGIRHIPDEIFLLTAEQIAQEVSEQHLSQGRLYPPLSTIRDVSLRIAIKVLDYAYKHNLASYYPEPKDKEAFVRSLVYTPDYDSFTLDSYTWPKEAMNVQTV</sequence>
<proteinExistence type="evidence at protein level"/>
<keyword id="KW-0002">3D-structure</keyword>
<keyword id="KW-0025">Alternative splicing</keyword>
<keyword id="KW-0479">Metal-binding</keyword>
<keyword id="KW-0496">Mitochondrion</keyword>
<keyword id="KW-0521">NADP</keyword>
<keyword id="KW-0560">Oxidoreductase</keyword>
<keyword id="KW-0597">Phosphoprotein</keyword>
<keyword id="KW-1267">Proteomics identification</keyword>
<keyword id="KW-1185">Reference proteome</keyword>
<keyword id="KW-0809">Transit peptide</keyword>
<name>MAON_HUMAN</name>
<organism>
    <name type="scientific">Homo sapiens</name>
    <name type="common">Human</name>
    <dbReference type="NCBI Taxonomy" id="9606"/>
    <lineage>
        <taxon>Eukaryota</taxon>
        <taxon>Metazoa</taxon>
        <taxon>Chordata</taxon>
        <taxon>Craniata</taxon>
        <taxon>Vertebrata</taxon>
        <taxon>Euteleostomi</taxon>
        <taxon>Mammalia</taxon>
        <taxon>Eutheria</taxon>
        <taxon>Euarchontoglires</taxon>
        <taxon>Primates</taxon>
        <taxon>Haplorrhini</taxon>
        <taxon>Catarrhini</taxon>
        <taxon>Hominidae</taxon>
        <taxon>Homo</taxon>
    </lineage>
</organism>
<comment type="function">
    <text evidence="6">Catalyzes the oxidative decarboxylation of (S)-malate to pyruvate using NADP(+) as a cofactor (PubMed:7818469). Can also reverse the decarboxylation reaction, but only with significantly lower efficiency (PubMed:7818469).</text>
</comment>
<comment type="catalytic activity">
    <reaction evidence="6">
        <text>(S)-malate + NADP(+) = pyruvate + CO2 + NADPH</text>
        <dbReference type="Rhea" id="RHEA:18253"/>
        <dbReference type="ChEBI" id="CHEBI:15361"/>
        <dbReference type="ChEBI" id="CHEBI:15589"/>
        <dbReference type="ChEBI" id="CHEBI:16526"/>
        <dbReference type="ChEBI" id="CHEBI:57783"/>
        <dbReference type="ChEBI" id="CHEBI:58349"/>
        <dbReference type="EC" id="1.1.1.40"/>
    </reaction>
    <physiologicalReaction direction="left-to-right" evidence="9">
        <dbReference type="Rhea" id="RHEA:18254"/>
    </physiologicalReaction>
    <physiologicalReaction direction="right-to-left" evidence="9">
        <dbReference type="Rhea" id="RHEA:18255"/>
    </physiologicalReaction>
</comment>
<comment type="catalytic activity">
    <reaction>
        <text>oxaloacetate + H(+) = pyruvate + CO2</text>
        <dbReference type="Rhea" id="RHEA:15641"/>
        <dbReference type="ChEBI" id="CHEBI:15361"/>
        <dbReference type="ChEBI" id="CHEBI:15378"/>
        <dbReference type="ChEBI" id="CHEBI:16452"/>
        <dbReference type="ChEBI" id="CHEBI:16526"/>
        <dbReference type="EC" id="1.1.1.40"/>
    </reaction>
</comment>
<comment type="cofactor">
    <cofactor evidence="1">
        <name>Mg(2+)</name>
        <dbReference type="ChEBI" id="CHEBI:18420"/>
    </cofactor>
    <cofactor evidence="1">
        <name>Mn(2+)</name>
        <dbReference type="ChEBI" id="CHEBI:29035"/>
    </cofactor>
    <text evidence="1">Divalent metal cations. Prefers magnesium or manganese.</text>
</comment>
<comment type="subcellular location">
    <subcellularLocation>
        <location>Mitochondrion matrix</location>
    </subcellularLocation>
</comment>
<comment type="alternative products">
    <event type="alternative splicing"/>
    <isoform>
        <id>Q16798-1</id>
        <name>1</name>
        <sequence type="displayed"/>
    </isoform>
    <isoform>
        <id>Q16798-2</id>
        <name>2</name>
        <sequence type="described" ref="VSP_056626 VSP_056627"/>
    </isoform>
</comment>
<comment type="tissue specificity">
    <text>Expressed predominantly in organs with a low-division rate.</text>
</comment>
<comment type="similarity">
    <text evidence="8">Belongs to the malic enzymes family.</text>
</comment>
<accession>Q16798</accession>
<accession>B7Z6V0</accession>
<accession>Q8TBJ0</accession>
<reference key="1">
    <citation type="journal article" date="1994" name="Biochem. J.">
        <title>Purification, cDNA cloning and heterologous expression of the human mitochondrial NADP(+)-dependent malic enzyme.</title>
        <authorList>
            <person name="Loeber G."/>
            <person name="Maurer-Fogy I."/>
            <person name="Schwendenwein R."/>
        </authorList>
    </citation>
    <scope>NUCLEOTIDE SEQUENCE [MRNA] (ISOFORM 1)</scope>
    <scope>VARIANT ASN-324</scope>
    <scope>FUNCTION</scope>
    <scope>CATALYTIC ACTIVITY</scope>
    <source>
        <tissue>Hippocampus</tissue>
    </source>
</reference>
<reference key="2">
    <citation type="journal article" date="2004" name="Nat. Genet.">
        <title>Complete sequencing and characterization of 21,243 full-length human cDNAs.</title>
        <authorList>
            <person name="Ota T."/>
            <person name="Suzuki Y."/>
            <person name="Nishikawa T."/>
            <person name="Otsuki T."/>
            <person name="Sugiyama T."/>
            <person name="Irie R."/>
            <person name="Wakamatsu A."/>
            <person name="Hayashi K."/>
            <person name="Sato H."/>
            <person name="Nagai K."/>
            <person name="Kimura K."/>
            <person name="Makita H."/>
            <person name="Sekine M."/>
            <person name="Obayashi M."/>
            <person name="Nishi T."/>
            <person name="Shibahara T."/>
            <person name="Tanaka T."/>
            <person name="Ishii S."/>
            <person name="Yamamoto J."/>
            <person name="Saito K."/>
            <person name="Kawai Y."/>
            <person name="Isono Y."/>
            <person name="Nakamura Y."/>
            <person name="Nagahari K."/>
            <person name="Murakami K."/>
            <person name="Yasuda T."/>
            <person name="Iwayanagi T."/>
            <person name="Wagatsuma M."/>
            <person name="Shiratori A."/>
            <person name="Sudo H."/>
            <person name="Hosoiri T."/>
            <person name="Kaku Y."/>
            <person name="Kodaira H."/>
            <person name="Kondo H."/>
            <person name="Sugawara M."/>
            <person name="Takahashi M."/>
            <person name="Kanda K."/>
            <person name="Yokoi T."/>
            <person name="Furuya T."/>
            <person name="Kikkawa E."/>
            <person name="Omura Y."/>
            <person name="Abe K."/>
            <person name="Kamihara K."/>
            <person name="Katsuta N."/>
            <person name="Sato K."/>
            <person name="Tanikawa M."/>
            <person name="Yamazaki M."/>
            <person name="Ninomiya K."/>
            <person name="Ishibashi T."/>
            <person name="Yamashita H."/>
            <person name="Murakawa K."/>
            <person name="Fujimori K."/>
            <person name="Tanai H."/>
            <person name="Kimata M."/>
            <person name="Watanabe M."/>
            <person name="Hiraoka S."/>
            <person name="Chiba Y."/>
            <person name="Ishida S."/>
            <person name="Ono Y."/>
            <person name="Takiguchi S."/>
            <person name="Watanabe S."/>
            <person name="Yosida M."/>
            <person name="Hotuta T."/>
            <person name="Kusano J."/>
            <person name="Kanehori K."/>
            <person name="Takahashi-Fujii A."/>
            <person name="Hara H."/>
            <person name="Tanase T.-O."/>
            <person name="Nomura Y."/>
            <person name="Togiya S."/>
            <person name="Komai F."/>
            <person name="Hara R."/>
            <person name="Takeuchi K."/>
            <person name="Arita M."/>
            <person name="Imose N."/>
            <person name="Musashino K."/>
            <person name="Yuuki H."/>
            <person name="Oshima A."/>
            <person name="Sasaki N."/>
            <person name="Aotsuka S."/>
            <person name="Yoshikawa Y."/>
            <person name="Matsunawa H."/>
            <person name="Ichihara T."/>
            <person name="Shiohata N."/>
            <person name="Sano S."/>
            <person name="Moriya S."/>
            <person name="Momiyama H."/>
            <person name="Satoh N."/>
            <person name="Takami S."/>
            <person name="Terashima Y."/>
            <person name="Suzuki O."/>
            <person name="Nakagawa S."/>
            <person name="Senoh A."/>
            <person name="Mizoguchi H."/>
            <person name="Goto Y."/>
            <person name="Shimizu F."/>
            <person name="Wakebe H."/>
            <person name="Hishigaki H."/>
            <person name="Watanabe T."/>
            <person name="Sugiyama A."/>
            <person name="Takemoto M."/>
            <person name="Kawakami B."/>
            <person name="Yamazaki M."/>
            <person name="Watanabe K."/>
            <person name="Kumagai A."/>
            <person name="Itakura S."/>
            <person name="Fukuzumi Y."/>
            <person name="Fujimori Y."/>
            <person name="Komiyama M."/>
            <person name="Tashiro H."/>
            <person name="Tanigami A."/>
            <person name="Fujiwara T."/>
            <person name="Ono T."/>
            <person name="Yamada K."/>
            <person name="Fujii Y."/>
            <person name="Ozaki K."/>
            <person name="Hirao M."/>
            <person name="Ohmori Y."/>
            <person name="Kawabata A."/>
            <person name="Hikiji T."/>
            <person name="Kobatake N."/>
            <person name="Inagaki H."/>
            <person name="Ikema Y."/>
            <person name="Okamoto S."/>
            <person name="Okitani R."/>
            <person name="Kawakami T."/>
            <person name="Noguchi S."/>
            <person name="Itoh T."/>
            <person name="Shigeta K."/>
            <person name="Senba T."/>
            <person name="Matsumura K."/>
            <person name="Nakajima Y."/>
            <person name="Mizuno T."/>
            <person name="Morinaga M."/>
            <person name="Sasaki M."/>
            <person name="Togashi T."/>
            <person name="Oyama M."/>
            <person name="Hata H."/>
            <person name="Watanabe M."/>
            <person name="Komatsu T."/>
            <person name="Mizushima-Sugano J."/>
            <person name="Satoh T."/>
            <person name="Shirai Y."/>
            <person name="Takahashi Y."/>
            <person name="Nakagawa K."/>
            <person name="Okumura K."/>
            <person name="Nagase T."/>
            <person name="Nomura N."/>
            <person name="Kikuchi H."/>
            <person name="Masuho Y."/>
            <person name="Yamashita R."/>
            <person name="Nakai K."/>
            <person name="Yada T."/>
            <person name="Nakamura Y."/>
            <person name="Ohara O."/>
            <person name="Isogai T."/>
            <person name="Sugano S."/>
        </authorList>
    </citation>
    <scope>NUCLEOTIDE SEQUENCE [LARGE SCALE MRNA] (ISOFORM 2)</scope>
    <source>
        <tissue>Small intestine</tissue>
    </source>
</reference>
<reference key="3">
    <citation type="journal article" date="2006" name="Nature">
        <title>Human chromosome 11 DNA sequence and analysis including novel gene identification.</title>
        <authorList>
            <person name="Taylor T.D."/>
            <person name="Noguchi H."/>
            <person name="Totoki Y."/>
            <person name="Toyoda A."/>
            <person name="Kuroki Y."/>
            <person name="Dewar K."/>
            <person name="Lloyd C."/>
            <person name="Itoh T."/>
            <person name="Takeda T."/>
            <person name="Kim D.-W."/>
            <person name="She X."/>
            <person name="Barlow K.F."/>
            <person name="Bloom T."/>
            <person name="Bruford E."/>
            <person name="Chang J.L."/>
            <person name="Cuomo C.A."/>
            <person name="Eichler E."/>
            <person name="FitzGerald M.G."/>
            <person name="Jaffe D.B."/>
            <person name="LaButti K."/>
            <person name="Nicol R."/>
            <person name="Park H.-S."/>
            <person name="Seaman C."/>
            <person name="Sougnez C."/>
            <person name="Yang X."/>
            <person name="Zimmer A.R."/>
            <person name="Zody M.C."/>
            <person name="Birren B.W."/>
            <person name="Nusbaum C."/>
            <person name="Fujiyama A."/>
            <person name="Hattori M."/>
            <person name="Rogers J."/>
            <person name="Lander E.S."/>
            <person name="Sakaki Y."/>
        </authorList>
    </citation>
    <scope>NUCLEOTIDE SEQUENCE [LARGE SCALE GENOMIC DNA]</scope>
</reference>
<reference key="4">
    <citation type="journal article" date="2004" name="Genome Res.">
        <title>The status, quality, and expansion of the NIH full-length cDNA project: the Mammalian Gene Collection (MGC).</title>
        <authorList>
            <consortium name="The MGC Project Team"/>
        </authorList>
    </citation>
    <scope>NUCLEOTIDE SEQUENCE [LARGE SCALE MRNA] (ISOFORM 1)</scope>
    <scope>VARIANTS GLY-85 AND ASN-324</scope>
    <source>
        <tissue>Brain</tissue>
    </source>
</reference>
<feature type="transit peptide" description="Mitochondrion" evidence="3">
    <location>
        <begin position="1"/>
        <end status="unknown"/>
    </location>
</feature>
<feature type="chain" id="PRO_0000018539" description="NADP-dependent malic enzyme, mitochondrial">
    <location>
        <begin status="unknown"/>
        <end position="604"/>
    </location>
</feature>
<feature type="region of interest" description="Disordered" evidence="4">
    <location>
        <begin position="29"/>
        <end position="50"/>
    </location>
</feature>
<feature type="active site" description="Proton donor" evidence="1">
    <location>
        <position position="137"/>
    </location>
</feature>
<feature type="active site" description="Proton acceptor" evidence="1">
    <location>
        <position position="208"/>
    </location>
</feature>
<feature type="binding site" evidence="1">
    <location>
        <position position="190"/>
    </location>
    <ligand>
        <name>NAD(+)</name>
        <dbReference type="ChEBI" id="CHEBI:57540"/>
    </ligand>
</feature>
<feature type="binding site" evidence="1">
    <location>
        <position position="280"/>
    </location>
    <ligand>
        <name>a divalent metal cation</name>
        <dbReference type="ChEBI" id="CHEBI:60240"/>
    </ligand>
</feature>
<feature type="binding site" evidence="1">
    <location>
        <position position="281"/>
    </location>
    <ligand>
        <name>a divalent metal cation</name>
        <dbReference type="ChEBI" id="CHEBI:60240"/>
    </ligand>
</feature>
<feature type="binding site" evidence="1">
    <location>
        <position position="304"/>
    </location>
    <ligand>
        <name>a divalent metal cation</name>
        <dbReference type="ChEBI" id="CHEBI:60240"/>
    </ligand>
</feature>
<feature type="binding site" evidence="1">
    <location>
        <position position="304"/>
    </location>
    <ligand>
        <name>NAD(+)</name>
        <dbReference type="ChEBI" id="CHEBI:57540"/>
    </ligand>
</feature>
<feature type="binding site" evidence="1">
    <location>
        <position position="443"/>
    </location>
    <ligand>
        <name>NAD(+)</name>
        <dbReference type="ChEBI" id="CHEBI:57540"/>
    </ligand>
</feature>
<feature type="site" description="Important for activity" evidence="1">
    <location>
        <position position="304"/>
    </location>
</feature>
<feature type="modified residue" description="Phosphoserine" evidence="2">
    <location>
        <position position="371"/>
    </location>
</feature>
<feature type="splice variant" id="VSP_056626" description="In isoform 2." evidence="7">
    <original>ASVAVAGILAALRITKNKLSNHVFVFQGAGEAAM</original>
    <variation>TCHTFSCPWHLWAQVMFQHIPGPMGFSEWLPRNS</variation>
    <location>
        <begin position="309"/>
        <end position="342"/>
    </location>
</feature>
<feature type="splice variant" id="VSP_056627" description="In isoform 2." evidence="7">
    <location>
        <begin position="343"/>
        <end position="604"/>
    </location>
</feature>
<feature type="sequence variant" id="VAR_047369" description="In dbSNP:rs17856661." evidence="5">
    <original>S</original>
    <variation>G</variation>
    <location>
        <position position="85"/>
    </location>
</feature>
<feature type="sequence variant" id="VAR_047370" description="In dbSNP:rs1042780." evidence="5 6">
    <original>K</original>
    <variation>N</variation>
    <location>
        <position position="324"/>
    </location>
</feature>
<feature type="sequence conflict" description="In Ref. 4; AAH22472." evidence="8" ref="4">
    <original>R</original>
    <variation>G</variation>
    <location>
        <position position="95"/>
    </location>
</feature>
<feature type="helix" evidence="13">
    <location>
        <begin position="51"/>
        <end position="55"/>
    </location>
</feature>
<feature type="turn" evidence="13">
    <location>
        <begin position="57"/>
        <end position="59"/>
    </location>
</feature>
<feature type="helix" evidence="13">
    <location>
        <begin position="62"/>
        <end position="64"/>
    </location>
</feature>
<feature type="helix" evidence="13">
    <location>
        <begin position="67"/>
        <end position="72"/>
    </location>
</feature>
<feature type="turn" evidence="11">
    <location>
        <begin position="76"/>
        <end position="78"/>
    </location>
</feature>
<feature type="helix" evidence="13">
    <location>
        <begin position="86"/>
        <end position="98"/>
    </location>
</feature>
<feature type="helix" evidence="13">
    <location>
        <begin position="103"/>
        <end position="116"/>
    </location>
</feature>
<feature type="helix" evidence="13">
    <location>
        <begin position="118"/>
        <end position="127"/>
    </location>
</feature>
<feature type="helix" evidence="13">
    <location>
        <begin position="129"/>
        <end position="136"/>
    </location>
</feature>
<feature type="helix" evidence="13">
    <location>
        <begin position="140"/>
        <end position="148"/>
    </location>
</feature>
<feature type="strand" evidence="13">
    <location>
        <begin position="157"/>
        <end position="161"/>
    </location>
</feature>
<feature type="helix" evidence="13">
    <location>
        <begin position="162"/>
        <end position="164"/>
    </location>
</feature>
<feature type="helix" evidence="13">
    <location>
        <begin position="168"/>
        <end position="172"/>
    </location>
</feature>
<feature type="strand" evidence="13">
    <location>
        <begin position="182"/>
        <end position="186"/>
    </location>
</feature>
<feature type="strand" evidence="14">
    <location>
        <begin position="188"/>
        <end position="191"/>
    </location>
</feature>
<feature type="turn" evidence="13">
    <location>
        <begin position="192"/>
        <end position="194"/>
    </location>
</feature>
<feature type="helix" evidence="13">
    <location>
        <begin position="198"/>
        <end position="202"/>
    </location>
</feature>
<feature type="helix" evidence="13">
    <location>
        <begin position="203"/>
        <end position="216"/>
    </location>
</feature>
<feature type="helix" evidence="13">
    <location>
        <begin position="220"/>
        <end position="222"/>
    </location>
</feature>
<feature type="strand" evidence="13">
    <location>
        <begin position="223"/>
        <end position="229"/>
    </location>
</feature>
<feature type="helix" evidence="13">
    <location>
        <begin position="235"/>
        <end position="238"/>
    </location>
</feature>
<feature type="helix" evidence="13">
    <location>
        <begin position="254"/>
        <end position="271"/>
    </location>
</feature>
<feature type="strand" evidence="13">
    <location>
        <begin position="276"/>
        <end position="279"/>
    </location>
</feature>
<feature type="helix" evidence="13">
    <location>
        <begin position="284"/>
        <end position="294"/>
    </location>
</feature>
<feature type="turn" evidence="13">
    <location>
        <begin position="295"/>
        <end position="297"/>
    </location>
</feature>
<feature type="strand" evidence="13">
    <location>
        <begin position="298"/>
        <end position="302"/>
    </location>
</feature>
<feature type="turn" evidence="13">
    <location>
        <begin position="303"/>
        <end position="305"/>
    </location>
</feature>
<feature type="helix" evidence="13">
    <location>
        <begin position="306"/>
        <end position="323"/>
    </location>
</feature>
<feature type="helix" evidence="13">
    <location>
        <begin position="327"/>
        <end position="329"/>
    </location>
</feature>
<feature type="strand" evidence="13">
    <location>
        <begin position="332"/>
        <end position="335"/>
    </location>
</feature>
<feature type="helix" evidence="13">
    <location>
        <begin position="339"/>
        <end position="354"/>
    </location>
</feature>
<feature type="helix" evidence="13">
    <location>
        <begin position="359"/>
        <end position="363"/>
    </location>
</feature>
<feature type="strand" evidence="13">
    <location>
        <begin position="366"/>
        <end position="370"/>
    </location>
</feature>
<feature type="strand" evidence="12">
    <location>
        <begin position="371"/>
        <end position="374"/>
    </location>
</feature>
<feature type="helix" evidence="13">
    <location>
        <begin position="386"/>
        <end position="389"/>
    </location>
</feature>
<feature type="strand" evidence="13">
    <location>
        <begin position="391"/>
        <end position="393"/>
    </location>
</feature>
<feature type="helix" evidence="13">
    <location>
        <begin position="399"/>
        <end position="406"/>
    </location>
</feature>
<feature type="strand" evidence="13">
    <location>
        <begin position="409"/>
        <end position="413"/>
    </location>
</feature>
<feature type="helix" evidence="13">
    <location>
        <begin position="423"/>
        <end position="432"/>
    </location>
</feature>
<feature type="strand" evidence="11">
    <location>
        <begin position="433"/>
        <end position="435"/>
    </location>
</feature>
<feature type="strand" evidence="13">
    <location>
        <begin position="437"/>
        <end position="440"/>
    </location>
</feature>
<feature type="helix" evidence="13">
    <location>
        <begin position="445"/>
        <end position="447"/>
    </location>
</feature>
<feature type="helix" evidence="13">
    <location>
        <begin position="452"/>
        <end position="458"/>
    </location>
</feature>
<feature type="turn" evidence="13">
    <location>
        <begin position="459"/>
        <end position="461"/>
    </location>
</feature>
<feature type="strand" evidence="13">
    <location>
        <begin position="464"/>
        <end position="469"/>
    </location>
</feature>
<feature type="helix" evidence="12">
    <location>
        <begin position="477"/>
        <end position="479"/>
    </location>
</feature>
<feature type="helix" evidence="13">
    <location>
        <begin position="489"/>
        <end position="491"/>
    </location>
</feature>
<feature type="helix" evidence="13">
    <location>
        <begin position="493"/>
        <end position="503"/>
    </location>
</feature>
<feature type="helix" evidence="13">
    <location>
        <begin position="510"/>
        <end position="523"/>
    </location>
</feature>
<feature type="helix" evidence="13">
    <location>
        <begin position="526"/>
        <end position="530"/>
    </location>
</feature>
<feature type="helix" evidence="13">
    <location>
        <begin position="538"/>
        <end position="540"/>
    </location>
</feature>
<feature type="helix" evidence="13">
    <location>
        <begin position="541"/>
        <end position="558"/>
    </location>
</feature>
<feature type="helix" evidence="13">
    <location>
        <begin position="571"/>
        <end position="578"/>
    </location>
</feature>
<feature type="helix" evidence="13">
    <location>
        <begin position="596"/>
        <end position="602"/>
    </location>
</feature>
<dbReference type="EC" id="1.1.1.40" evidence="6"/>
<dbReference type="EMBL" id="X79440">
    <property type="protein sequence ID" value="CAA55956.1"/>
    <property type="molecule type" value="mRNA"/>
</dbReference>
<dbReference type="EMBL" id="AK300974">
    <property type="protein sequence ID" value="BAH13386.1"/>
    <property type="molecule type" value="mRNA"/>
</dbReference>
<dbReference type="EMBL" id="AP001148">
    <property type="status" value="NOT_ANNOTATED_CDS"/>
    <property type="molecule type" value="Genomic_DNA"/>
</dbReference>
<dbReference type="EMBL" id="AP001831">
    <property type="status" value="NOT_ANNOTATED_CDS"/>
    <property type="molecule type" value="Genomic_DNA"/>
</dbReference>
<dbReference type="EMBL" id="AP002492">
    <property type="status" value="NOT_ANNOTATED_CDS"/>
    <property type="molecule type" value="Genomic_DNA"/>
</dbReference>
<dbReference type="EMBL" id="BC022472">
    <property type="protein sequence ID" value="AAH22472.1"/>
    <property type="molecule type" value="mRNA"/>
</dbReference>
<dbReference type="CCDS" id="CCDS8277.1">
    <molecule id="Q16798-1"/>
</dbReference>
<dbReference type="PIR" id="S53351">
    <property type="entry name" value="S53351"/>
</dbReference>
<dbReference type="RefSeq" id="NP_001014811.1">
    <molecule id="Q16798-1"/>
    <property type="nucleotide sequence ID" value="NM_001014811.2"/>
</dbReference>
<dbReference type="RefSeq" id="NP_001155058.1">
    <molecule id="Q16798-1"/>
    <property type="nucleotide sequence ID" value="NM_001161586.3"/>
</dbReference>
<dbReference type="RefSeq" id="NP_001338863.1">
    <molecule id="Q16798-1"/>
    <property type="nucleotide sequence ID" value="NM_001351934.2"/>
</dbReference>
<dbReference type="RefSeq" id="NP_006671.2">
    <molecule id="Q16798-1"/>
    <property type="nucleotide sequence ID" value="NM_006680.3"/>
</dbReference>
<dbReference type="RefSeq" id="XP_005273774.1">
    <property type="nucleotide sequence ID" value="XM_005273717.1"/>
</dbReference>
<dbReference type="PDB" id="8E76">
    <property type="method" value="EM"/>
    <property type="resolution" value="2.51 A"/>
    <property type="chains" value="A/B/C/D=1-604"/>
</dbReference>
<dbReference type="PDB" id="8E78">
    <property type="method" value="EM"/>
    <property type="resolution" value="2.77 A"/>
    <property type="chains" value="A/B/C/D=1-604"/>
</dbReference>
<dbReference type="PDB" id="8E8O">
    <property type="method" value="EM"/>
    <property type="resolution" value="2.77 A"/>
    <property type="chains" value="A/B/C/D=1-604"/>
</dbReference>
<dbReference type="PDB" id="8EYN">
    <property type="method" value="X-ray"/>
    <property type="resolution" value="1.94 A"/>
    <property type="chains" value="A/B=46-604"/>
</dbReference>
<dbReference type="PDB" id="8EYO">
    <property type="method" value="X-ray"/>
    <property type="resolution" value="2.49 A"/>
    <property type="chains" value="A/B=46-604"/>
</dbReference>
<dbReference type="PDBsum" id="8E76"/>
<dbReference type="PDBsum" id="8E78"/>
<dbReference type="PDBsum" id="8E8O"/>
<dbReference type="PDBsum" id="8EYN"/>
<dbReference type="PDBsum" id="8EYO"/>
<dbReference type="EMDB" id="EMD-27936"/>
<dbReference type="EMDB" id="EMD-27937"/>
<dbReference type="EMDB" id="EMD-27945"/>
<dbReference type="SMR" id="Q16798"/>
<dbReference type="BioGRID" id="116081">
    <property type="interactions" value="6"/>
</dbReference>
<dbReference type="FunCoup" id="Q16798">
    <property type="interactions" value="1156"/>
</dbReference>
<dbReference type="IntAct" id="Q16798">
    <property type="interactions" value="1"/>
</dbReference>
<dbReference type="STRING" id="9606.ENSP00000440246"/>
<dbReference type="BindingDB" id="Q16798"/>
<dbReference type="ChEMBL" id="CHEMBL6182"/>
<dbReference type="DrugBank" id="DB00157">
    <property type="generic name" value="NADH"/>
</dbReference>
<dbReference type="DrugBank" id="DB03680">
    <property type="generic name" value="Tartronate"/>
</dbReference>
<dbReference type="iPTMnet" id="Q16798"/>
<dbReference type="PhosphoSitePlus" id="Q16798"/>
<dbReference type="BioMuta" id="ME3"/>
<dbReference type="DMDM" id="215274021"/>
<dbReference type="CPTAC" id="CPTAC-1536"/>
<dbReference type="CPTAC" id="CPTAC-1537"/>
<dbReference type="jPOST" id="Q16798"/>
<dbReference type="MassIVE" id="Q16798"/>
<dbReference type="PaxDb" id="9606-ENSP00000440246"/>
<dbReference type="PeptideAtlas" id="Q16798"/>
<dbReference type="ProteomicsDB" id="61073">
    <molecule id="Q16798-1"/>
</dbReference>
<dbReference type="ProteomicsDB" id="6809"/>
<dbReference type="Pumba" id="Q16798"/>
<dbReference type="Antibodypedia" id="31451">
    <property type="antibodies" value="130 antibodies from 25 providers"/>
</dbReference>
<dbReference type="DNASU" id="10873"/>
<dbReference type="Ensembl" id="ENST00000393324.7">
    <molecule id="Q16798-1"/>
    <property type="protein sequence ID" value="ENSP00000376998.2"/>
    <property type="gene ID" value="ENSG00000151376.19"/>
</dbReference>
<dbReference type="Ensembl" id="ENST00000526504.5">
    <molecule id="Q16798-2"/>
    <property type="protein sequence ID" value="ENSP00000433636.1"/>
    <property type="gene ID" value="ENSG00000151376.19"/>
</dbReference>
<dbReference type="Ensembl" id="ENST00000543262.6">
    <molecule id="Q16798-1"/>
    <property type="protein sequence ID" value="ENSP00000440246.1"/>
    <property type="gene ID" value="ENSG00000151376.19"/>
</dbReference>
<dbReference type="GeneID" id="10873"/>
<dbReference type="KEGG" id="hsa:10873"/>
<dbReference type="MANE-Select" id="ENST00000543262.6">
    <property type="protein sequence ID" value="ENSP00000440246.1"/>
    <property type="RefSeq nucleotide sequence ID" value="NM_001161586.3"/>
    <property type="RefSeq protein sequence ID" value="NP_001155058.1"/>
</dbReference>
<dbReference type="UCSC" id="uc001pbz.3">
    <molecule id="Q16798-1"/>
    <property type="organism name" value="human"/>
</dbReference>
<dbReference type="AGR" id="HGNC:6985"/>
<dbReference type="CTD" id="10873"/>
<dbReference type="DisGeNET" id="10873"/>
<dbReference type="GeneCards" id="ME3"/>
<dbReference type="HGNC" id="HGNC:6985">
    <property type="gene designation" value="ME3"/>
</dbReference>
<dbReference type="HPA" id="ENSG00000151376">
    <property type="expression patterns" value="Low tissue specificity"/>
</dbReference>
<dbReference type="MIM" id="604626">
    <property type="type" value="gene"/>
</dbReference>
<dbReference type="neXtProt" id="NX_Q16798"/>
<dbReference type="OpenTargets" id="ENSG00000151376"/>
<dbReference type="PharmGKB" id="PA30725"/>
<dbReference type="VEuPathDB" id="HostDB:ENSG00000151376"/>
<dbReference type="eggNOG" id="KOG1257">
    <property type="taxonomic scope" value="Eukaryota"/>
</dbReference>
<dbReference type="GeneTree" id="ENSGT00950000183134"/>
<dbReference type="HOGENOM" id="CLU_011405_5_2_1"/>
<dbReference type="InParanoid" id="Q16798"/>
<dbReference type="OMA" id="EVPVTPW"/>
<dbReference type="OrthoDB" id="5365701at2759"/>
<dbReference type="PAN-GO" id="Q16798">
    <property type="GO annotations" value="4 GO annotations based on evolutionary models"/>
</dbReference>
<dbReference type="PhylomeDB" id="Q16798"/>
<dbReference type="TreeFam" id="TF300537"/>
<dbReference type="PathwayCommons" id="Q16798"/>
<dbReference type="Reactome" id="R-HSA-70268">
    <property type="pathway name" value="Pyruvate metabolism"/>
</dbReference>
<dbReference type="SABIO-RK" id="Q16798"/>
<dbReference type="SignaLink" id="Q16798"/>
<dbReference type="BioGRID-ORCS" id="10873">
    <property type="hits" value="13 hits in 1153 CRISPR screens"/>
</dbReference>
<dbReference type="ChiTaRS" id="ME3">
    <property type="organism name" value="human"/>
</dbReference>
<dbReference type="GenomeRNAi" id="10873"/>
<dbReference type="Pharos" id="Q16798">
    <property type="development level" value="Tbio"/>
</dbReference>
<dbReference type="PRO" id="PR:Q16798"/>
<dbReference type="Proteomes" id="UP000005640">
    <property type="component" value="Chromosome 11"/>
</dbReference>
<dbReference type="RNAct" id="Q16798">
    <property type="molecule type" value="protein"/>
</dbReference>
<dbReference type="Bgee" id="ENSG00000151376">
    <property type="expression patterns" value="Expressed in apex of heart and 185 other cell types or tissues"/>
</dbReference>
<dbReference type="ExpressionAtlas" id="Q16798">
    <property type="expression patterns" value="baseline and differential"/>
</dbReference>
<dbReference type="GO" id="GO:0005759">
    <property type="term" value="C:mitochondrial matrix"/>
    <property type="evidence" value="ECO:0000304"/>
    <property type="project" value="Reactome"/>
</dbReference>
<dbReference type="GO" id="GO:0005739">
    <property type="term" value="C:mitochondrion"/>
    <property type="evidence" value="ECO:0006056"/>
    <property type="project" value="FlyBase"/>
</dbReference>
<dbReference type="GO" id="GO:0004473">
    <property type="term" value="F:malate dehydrogenase (decarboxylating) (NADP+) activity"/>
    <property type="evidence" value="ECO:0000314"/>
    <property type="project" value="UniProtKB"/>
</dbReference>
<dbReference type="GO" id="GO:0004470">
    <property type="term" value="F:malic enzyme activity"/>
    <property type="evidence" value="ECO:0000314"/>
    <property type="project" value="UniProtKB"/>
</dbReference>
<dbReference type="GO" id="GO:0046872">
    <property type="term" value="F:metal ion binding"/>
    <property type="evidence" value="ECO:0007669"/>
    <property type="project" value="UniProtKB-KW"/>
</dbReference>
<dbReference type="GO" id="GO:0051287">
    <property type="term" value="F:NAD binding"/>
    <property type="evidence" value="ECO:0007669"/>
    <property type="project" value="InterPro"/>
</dbReference>
<dbReference type="GO" id="GO:0070401">
    <property type="term" value="F:NADP+ binding"/>
    <property type="evidence" value="ECO:0000314"/>
    <property type="project" value="UniProtKB"/>
</dbReference>
<dbReference type="GO" id="GO:0008948">
    <property type="term" value="F:oxaloacetate decarboxylase activity"/>
    <property type="evidence" value="ECO:0007669"/>
    <property type="project" value="RHEA"/>
</dbReference>
<dbReference type="GO" id="GO:0009060">
    <property type="term" value="P:aerobic respiration"/>
    <property type="evidence" value="ECO:0000304"/>
    <property type="project" value="UniProtKB"/>
</dbReference>
<dbReference type="GO" id="GO:0006108">
    <property type="term" value="P:malate metabolic process"/>
    <property type="evidence" value="ECO:0000314"/>
    <property type="project" value="UniProtKB"/>
</dbReference>
<dbReference type="GO" id="GO:0072592">
    <property type="term" value="P:oxygen metabolic process"/>
    <property type="evidence" value="ECO:0000304"/>
    <property type="project" value="UniProtKB"/>
</dbReference>
<dbReference type="GO" id="GO:0006090">
    <property type="term" value="P:pyruvate metabolic process"/>
    <property type="evidence" value="ECO:0000314"/>
    <property type="project" value="UniProtKB"/>
</dbReference>
<dbReference type="CDD" id="cd05312">
    <property type="entry name" value="NAD_bind_1_malic_enz"/>
    <property type="match status" value="1"/>
</dbReference>
<dbReference type="FunFam" id="3.40.50.10380:FF:000004">
    <property type="entry name" value="Malic enzyme"/>
    <property type="match status" value="1"/>
</dbReference>
<dbReference type="FunFam" id="3.40.50.720:FF:000060">
    <property type="entry name" value="Malic enzyme"/>
    <property type="match status" value="1"/>
</dbReference>
<dbReference type="Gene3D" id="3.40.50.10380">
    <property type="entry name" value="Malic enzyme, N-terminal domain"/>
    <property type="match status" value="1"/>
</dbReference>
<dbReference type="Gene3D" id="3.40.50.720">
    <property type="entry name" value="NAD(P)-binding Rossmann-like Domain"/>
    <property type="match status" value="1"/>
</dbReference>
<dbReference type="InterPro" id="IPR046346">
    <property type="entry name" value="Aminoacid_DH-like_N_sf"/>
</dbReference>
<dbReference type="InterPro" id="IPR015884">
    <property type="entry name" value="Malic_enzyme_CS"/>
</dbReference>
<dbReference type="InterPro" id="IPR012301">
    <property type="entry name" value="Malic_N_dom"/>
</dbReference>
<dbReference type="InterPro" id="IPR037062">
    <property type="entry name" value="Malic_N_dom_sf"/>
</dbReference>
<dbReference type="InterPro" id="IPR012302">
    <property type="entry name" value="Malic_NAD-bd"/>
</dbReference>
<dbReference type="InterPro" id="IPR001891">
    <property type="entry name" value="Malic_OxRdtase"/>
</dbReference>
<dbReference type="InterPro" id="IPR036291">
    <property type="entry name" value="NAD(P)-bd_dom_sf"/>
</dbReference>
<dbReference type="NCBIfam" id="NF010052">
    <property type="entry name" value="PRK13529.1"/>
    <property type="match status" value="1"/>
</dbReference>
<dbReference type="PANTHER" id="PTHR23406">
    <property type="entry name" value="MALIC ENZYME-RELATED"/>
    <property type="match status" value="1"/>
</dbReference>
<dbReference type="PANTHER" id="PTHR23406:SF20">
    <property type="entry name" value="NADP-DEPENDENT MALIC ENZYME, MITOCHONDRIAL"/>
    <property type="match status" value="1"/>
</dbReference>
<dbReference type="Pfam" id="PF00390">
    <property type="entry name" value="malic"/>
    <property type="match status" value="1"/>
</dbReference>
<dbReference type="Pfam" id="PF03949">
    <property type="entry name" value="Malic_M"/>
    <property type="match status" value="1"/>
</dbReference>
<dbReference type="PIRSF" id="PIRSF000106">
    <property type="entry name" value="ME"/>
    <property type="match status" value="1"/>
</dbReference>
<dbReference type="PRINTS" id="PR00072">
    <property type="entry name" value="MALOXRDTASE"/>
</dbReference>
<dbReference type="SMART" id="SM01274">
    <property type="entry name" value="malic"/>
    <property type="match status" value="1"/>
</dbReference>
<dbReference type="SMART" id="SM00919">
    <property type="entry name" value="Malic_M"/>
    <property type="match status" value="1"/>
</dbReference>
<dbReference type="SUPFAM" id="SSF53223">
    <property type="entry name" value="Aminoacid dehydrogenase-like, N-terminal domain"/>
    <property type="match status" value="1"/>
</dbReference>
<dbReference type="SUPFAM" id="SSF51735">
    <property type="entry name" value="NAD(P)-binding Rossmann-fold domains"/>
    <property type="match status" value="1"/>
</dbReference>
<dbReference type="PROSITE" id="PS00331">
    <property type="entry name" value="MALIC_ENZYMES"/>
    <property type="match status" value="1"/>
</dbReference>
<protein>
    <recommendedName>
        <fullName evidence="8">NADP-dependent malic enzyme, mitochondrial</fullName>
        <shortName>NADP-ME</shortName>
        <ecNumber evidence="6">1.1.1.40</ecNumber>
    </recommendedName>
    <alternativeName>
        <fullName>Malic enzyme 3</fullName>
    </alternativeName>
</protein>
<gene>
    <name evidence="10" type="primary">ME3</name>
</gene>